<feature type="chain" id="PRO_1000098728" description="Glycerol kinase">
    <location>
        <begin position="1"/>
        <end position="498"/>
    </location>
</feature>
<feature type="binding site" evidence="1">
    <location>
        <position position="11"/>
    </location>
    <ligand>
        <name>ADP</name>
        <dbReference type="ChEBI" id="CHEBI:456216"/>
    </ligand>
</feature>
<feature type="binding site" evidence="1">
    <location>
        <position position="11"/>
    </location>
    <ligand>
        <name>ATP</name>
        <dbReference type="ChEBI" id="CHEBI:30616"/>
    </ligand>
</feature>
<feature type="binding site" evidence="1">
    <location>
        <position position="11"/>
    </location>
    <ligand>
        <name>sn-glycerol 3-phosphate</name>
        <dbReference type="ChEBI" id="CHEBI:57597"/>
    </ligand>
</feature>
<feature type="binding site" evidence="1">
    <location>
        <position position="12"/>
    </location>
    <ligand>
        <name>ATP</name>
        <dbReference type="ChEBI" id="CHEBI:30616"/>
    </ligand>
</feature>
<feature type="binding site" evidence="1">
    <location>
        <position position="13"/>
    </location>
    <ligand>
        <name>ATP</name>
        <dbReference type="ChEBI" id="CHEBI:30616"/>
    </ligand>
</feature>
<feature type="binding site" evidence="1">
    <location>
        <position position="15"/>
    </location>
    <ligand>
        <name>ADP</name>
        <dbReference type="ChEBI" id="CHEBI:456216"/>
    </ligand>
</feature>
<feature type="binding site" evidence="1">
    <location>
        <position position="81"/>
    </location>
    <ligand>
        <name>glycerol</name>
        <dbReference type="ChEBI" id="CHEBI:17754"/>
    </ligand>
</feature>
<feature type="binding site" evidence="1">
    <location>
        <position position="81"/>
    </location>
    <ligand>
        <name>sn-glycerol 3-phosphate</name>
        <dbReference type="ChEBI" id="CHEBI:57597"/>
    </ligand>
</feature>
<feature type="binding site" evidence="1">
    <location>
        <position position="82"/>
    </location>
    <ligand>
        <name>glycerol</name>
        <dbReference type="ChEBI" id="CHEBI:17754"/>
    </ligand>
</feature>
<feature type="binding site" evidence="1">
    <location>
        <position position="82"/>
    </location>
    <ligand>
        <name>sn-glycerol 3-phosphate</name>
        <dbReference type="ChEBI" id="CHEBI:57597"/>
    </ligand>
</feature>
<feature type="binding site" evidence="1">
    <location>
        <position position="133"/>
    </location>
    <ligand>
        <name>glycerol</name>
        <dbReference type="ChEBI" id="CHEBI:17754"/>
    </ligand>
</feature>
<feature type="binding site" evidence="1">
    <location>
        <position position="133"/>
    </location>
    <ligand>
        <name>sn-glycerol 3-phosphate</name>
        <dbReference type="ChEBI" id="CHEBI:57597"/>
    </ligand>
</feature>
<feature type="binding site" evidence="1">
    <location>
        <position position="242"/>
    </location>
    <ligand>
        <name>glycerol</name>
        <dbReference type="ChEBI" id="CHEBI:17754"/>
    </ligand>
</feature>
<feature type="binding site" evidence="1">
    <location>
        <position position="242"/>
    </location>
    <ligand>
        <name>sn-glycerol 3-phosphate</name>
        <dbReference type="ChEBI" id="CHEBI:57597"/>
    </ligand>
</feature>
<feature type="binding site" evidence="1">
    <location>
        <position position="243"/>
    </location>
    <ligand>
        <name>glycerol</name>
        <dbReference type="ChEBI" id="CHEBI:17754"/>
    </ligand>
</feature>
<feature type="binding site" evidence="1">
    <location>
        <position position="264"/>
    </location>
    <ligand>
        <name>ADP</name>
        <dbReference type="ChEBI" id="CHEBI:456216"/>
    </ligand>
</feature>
<feature type="binding site" evidence="1">
    <location>
        <position position="264"/>
    </location>
    <ligand>
        <name>ATP</name>
        <dbReference type="ChEBI" id="CHEBI:30616"/>
    </ligand>
</feature>
<feature type="binding site" evidence="1">
    <location>
        <position position="307"/>
    </location>
    <ligand>
        <name>ADP</name>
        <dbReference type="ChEBI" id="CHEBI:456216"/>
    </ligand>
</feature>
<feature type="binding site" evidence="1">
    <location>
        <position position="307"/>
    </location>
    <ligand>
        <name>ATP</name>
        <dbReference type="ChEBI" id="CHEBI:30616"/>
    </ligand>
</feature>
<feature type="binding site" evidence="1">
    <location>
        <position position="311"/>
    </location>
    <ligand>
        <name>ATP</name>
        <dbReference type="ChEBI" id="CHEBI:30616"/>
    </ligand>
</feature>
<feature type="binding site" evidence="1">
    <location>
        <position position="412"/>
    </location>
    <ligand>
        <name>ADP</name>
        <dbReference type="ChEBI" id="CHEBI:456216"/>
    </ligand>
</feature>
<feature type="binding site" evidence="1">
    <location>
        <position position="412"/>
    </location>
    <ligand>
        <name>ATP</name>
        <dbReference type="ChEBI" id="CHEBI:30616"/>
    </ligand>
</feature>
<feature type="binding site" evidence="1">
    <location>
        <position position="416"/>
    </location>
    <ligand>
        <name>ADP</name>
        <dbReference type="ChEBI" id="CHEBI:456216"/>
    </ligand>
</feature>
<sequence length="498" mass="53089">MTYLLALDQGTSSSRSIVFDTQGRIVASAQLELPQIYPRPGWVEHDPREIWRTQLATAREALAKAGLAAADIRALGITNQRETTVVWNRATGQPIHHAIVWQDRRAEPLCAQLREAGHADTIQRKTGLLIDAYFSGTKLRWILDNVNGARAAAERGELAFGTVDSWLIWQLTGGRRHVTDVSNASRTMLFNVHTNQWDDDLLALLEIPRALMPEVLPSAADFGRTAAEVLGGEIAIGGVAGDQQSALFGQACFSAGMAKNTYGTGCFMLMHTGGVFQTSANGLLTTAAAQPTAAPAYALEGSVFVGGAVVQWLRDGLRAIEHSGQVQQLAESVPDSGGVMMVPAFTGLGAPYWKPDARGTITGLTRGTTIAHIARAALESIAFQSAALLLAMSRDAVASGGAPVSELRVDGGACVNNLLMQFQADLLGIPVVRPACVETTALGAAYLAGLSSGVYQSTEELSALWKAERRFVPTLDKHRADELMARWEHAVAQTALAA</sequence>
<evidence type="ECO:0000255" key="1">
    <source>
        <dbReference type="HAMAP-Rule" id="MF_00186"/>
    </source>
</evidence>
<reference key="1">
    <citation type="submission" date="2007-11" db="EMBL/GenBank/DDBJ databases">
        <title>Complete sequence of Delftia acidovorans DSM 14801 / SPH-1.</title>
        <authorList>
            <person name="Copeland A."/>
            <person name="Lucas S."/>
            <person name="Lapidus A."/>
            <person name="Barry K."/>
            <person name="Glavina del Rio T."/>
            <person name="Dalin E."/>
            <person name="Tice H."/>
            <person name="Pitluck S."/>
            <person name="Lowry S."/>
            <person name="Clum A."/>
            <person name="Schmutz J."/>
            <person name="Larimer F."/>
            <person name="Land M."/>
            <person name="Hauser L."/>
            <person name="Kyrpides N."/>
            <person name="Kim E."/>
            <person name="Schleheck D."/>
            <person name="Richardson P."/>
        </authorList>
    </citation>
    <scope>NUCLEOTIDE SEQUENCE [LARGE SCALE GENOMIC DNA]</scope>
    <source>
        <strain>DSM 14801 / SPH-1</strain>
    </source>
</reference>
<comment type="function">
    <text evidence="1">Key enzyme in the regulation of glycerol uptake and metabolism. Catalyzes the phosphorylation of glycerol to yield sn-glycerol 3-phosphate.</text>
</comment>
<comment type="catalytic activity">
    <reaction evidence="1">
        <text>glycerol + ATP = sn-glycerol 3-phosphate + ADP + H(+)</text>
        <dbReference type="Rhea" id="RHEA:21644"/>
        <dbReference type="ChEBI" id="CHEBI:15378"/>
        <dbReference type="ChEBI" id="CHEBI:17754"/>
        <dbReference type="ChEBI" id="CHEBI:30616"/>
        <dbReference type="ChEBI" id="CHEBI:57597"/>
        <dbReference type="ChEBI" id="CHEBI:456216"/>
        <dbReference type="EC" id="2.7.1.30"/>
    </reaction>
</comment>
<comment type="activity regulation">
    <text evidence="1">Inhibited by fructose 1,6-bisphosphate (FBP).</text>
</comment>
<comment type="pathway">
    <text evidence="1">Polyol metabolism; glycerol degradation via glycerol kinase pathway; sn-glycerol 3-phosphate from glycerol: step 1/1.</text>
</comment>
<comment type="similarity">
    <text evidence="1">Belongs to the FGGY kinase family.</text>
</comment>
<gene>
    <name evidence="1" type="primary">glpK</name>
    <name type="ordered locus">Daci_1023</name>
</gene>
<organism>
    <name type="scientific">Delftia acidovorans (strain DSM 14801 / SPH-1)</name>
    <dbReference type="NCBI Taxonomy" id="398578"/>
    <lineage>
        <taxon>Bacteria</taxon>
        <taxon>Pseudomonadati</taxon>
        <taxon>Pseudomonadota</taxon>
        <taxon>Betaproteobacteria</taxon>
        <taxon>Burkholderiales</taxon>
        <taxon>Comamonadaceae</taxon>
        <taxon>Delftia</taxon>
    </lineage>
</organism>
<protein>
    <recommendedName>
        <fullName evidence="1">Glycerol kinase</fullName>
        <ecNumber evidence="1">2.7.1.30</ecNumber>
    </recommendedName>
    <alternativeName>
        <fullName evidence="1">ATP:glycerol 3-phosphotransferase</fullName>
    </alternativeName>
    <alternativeName>
        <fullName evidence="1">Glycerokinase</fullName>
        <shortName evidence="1">GK</shortName>
    </alternativeName>
</protein>
<accession>A9BRV2</accession>
<name>GLPK_DELAS</name>
<proteinExistence type="inferred from homology"/>
<keyword id="KW-0067">ATP-binding</keyword>
<keyword id="KW-0319">Glycerol metabolism</keyword>
<keyword id="KW-0418">Kinase</keyword>
<keyword id="KW-0547">Nucleotide-binding</keyword>
<keyword id="KW-1185">Reference proteome</keyword>
<keyword id="KW-0808">Transferase</keyword>
<dbReference type="EC" id="2.7.1.30" evidence="1"/>
<dbReference type="EMBL" id="CP000884">
    <property type="protein sequence ID" value="ABX33669.1"/>
    <property type="molecule type" value="Genomic_DNA"/>
</dbReference>
<dbReference type="RefSeq" id="WP_012202955.1">
    <property type="nucleotide sequence ID" value="NC_010002.1"/>
</dbReference>
<dbReference type="SMR" id="A9BRV2"/>
<dbReference type="STRING" id="398578.Daci_1023"/>
<dbReference type="GeneID" id="24117201"/>
<dbReference type="KEGG" id="dac:Daci_1023"/>
<dbReference type="eggNOG" id="COG0554">
    <property type="taxonomic scope" value="Bacteria"/>
</dbReference>
<dbReference type="HOGENOM" id="CLU_009281_2_3_4"/>
<dbReference type="UniPathway" id="UPA00618">
    <property type="reaction ID" value="UER00672"/>
</dbReference>
<dbReference type="Proteomes" id="UP000000784">
    <property type="component" value="Chromosome"/>
</dbReference>
<dbReference type="GO" id="GO:0005829">
    <property type="term" value="C:cytosol"/>
    <property type="evidence" value="ECO:0007669"/>
    <property type="project" value="TreeGrafter"/>
</dbReference>
<dbReference type="GO" id="GO:0005524">
    <property type="term" value="F:ATP binding"/>
    <property type="evidence" value="ECO:0007669"/>
    <property type="project" value="UniProtKB-UniRule"/>
</dbReference>
<dbReference type="GO" id="GO:0004370">
    <property type="term" value="F:glycerol kinase activity"/>
    <property type="evidence" value="ECO:0000250"/>
    <property type="project" value="UniProtKB"/>
</dbReference>
<dbReference type="GO" id="GO:0019563">
    <property type="term" value="P:glycerol catabolic process"/>
    <property type="evidence" value="ECO:0007669"/>
    <property type="project" value="UniProtKB-UniRule"/>
</dbReference>
<dbReference type="GO" id="GO:0006071">
    <property type="term" value="P:glycerol metabolic process"/>
    <property type="evidence" value="ECO:0000250"/>
    <property type="project" value="UniProtKB"/>
</dbReference>
<dbReference type="GO" id="GO:0006072">
    <property type="term" value="P:glycerol-3-phosphate metabolic process"/>
    <property type="evidence" value="ECO:0007669"/>
    <property type="project" value="InterPro"/>
</dbReference>
<dbReference type="CDD" id="cd07786">
    <property type="entry name" value="FGGY_EcGK_like"/>
    <property type="match status" value="1"/>
</dbReference>
<dbReference type="FunFam" id="3.30.420.40:FF:000007">
    <property type="entry name" value="Glycerol kinase"/>
    <property type="match status" value="1"/>
</dbReference>
<dbReference type="FunFam" id="3.30.420.40:FF:000008">
    <property type="entry name" value="Glycerol kinase"/>
    <property type="match status" value="1"/>
</dbReference>
<dbReference type="Gene3D" id="3.30.420.40">
    <property type="match status" value="2"/>
</dbReference>
<dbReference type="HAMAP" id="MF_00186">
    <property type="entry name" value="Glycerol_kin"/>
    <property type="match status" value="1"/>
</dbReference>
<dbReference type="InterPro" id="IPR043129">
    <property type="entry name" value="ATPase_NBD"/>
</dbReference>
<dbReference type="InterPro" id="IPR000577">
    <property type="entry name" value="Carb_kinase_FGGY"/>
</dbReference>
<dbReference type="InterPro" id="IPR018483">
    <property type="entry name" value="Carb_kinase_FGGY_CS"/>
</dbReference>
<dbReference type="InterPro" id="IPR018485">
    <property type="entry name" value="FGGY_C"/>
</dbReference>
<dbReference type="InterPro" id="IPR018484">
    <property type="entry name" value="FGGY_N"/>
</dbReference>
<dbReference type="InterPro" id="IPR005999">
    <property type="entry name" value="Glycerol_kin"/>
</dbReference>
<dbReference type="NCBIfam" id="TIGR01311">
    <property type="entry name" value="glycerol_kin"/>
    <property type="match status" value="1"/>
</dbReference>
<dbReference type="NCBIfam" id="NF000756">
    <property type="entry name" value="PRK00047.1"/>
    <property type="match status" value="1"/>
</dbReference>
<dbReference type="PANTHER" id="PTHR10196:SF69">
    <property type="entry name" value="GLYCEROL KINASE"/>
    <property type="match status" value="1"/>
</dbReference>
<dbReference type="PANTHER" id="PTHR10196">
    <property type="entry name" value="SUGAR KINASE"/>
    <property type="match status" value="1"/>
</dbReference>
<dbReference type="Pfam" id="PF02782">
    <property type="entry name" value="FGGY_C"/>
    <property type="match status" value="1"/>
</dbReference>
<dbReference type="Pfam" id="PF00370">
    <property type="entry name" value="FGGY_N"/>
    <property type="match status" value="1"/>
</dbReference>
<dbReference type="PIRSF" id="PIRSF000538">
    <property type="entry name" value="GlpK"/>
    <property type="match status" value="1"/>
</dbReference>
<dbReference type="SUPFAM" id="SSF53067">
    <property type="entry name" value="Actin-like ATPase domain"/>
    <property type="match status" value="2"/>
</dbReference>
<dbReference type="PROSITE" id="PS00933">
    <property type="entry name" value="FGGY_KINASES_1"/>
    <property type="match status" value="1"/>
</dbReference>
<dbReference type="PROSITE" id="PS00445">
    <property type="entry name" value="FGGY_KINASES_2"/>
    <property type="match status" value="1"/>
</dbReference>